<sequence length="681" mass="77322">MTVPAARSGRKVYFIGLNAVPFLPLVAGLLRTYAEQDPRVAAGYDFQEPVFLVDGVQEMAAGITDPDVLALSCYVWNFRRQMKVARLVKERHPGMLVVAGGPHVPDRPGDFFARHPYVDVLVHGEGETAFRELLIERLADHPDYTRVPGVSVRHGTEAVPGRPAERLPRRIETPSPYLLGVMDGAVATCRQRDLRFYALWETNRGCPYSCAFCDWGSATMSALRLFDAERLQEEIEWFAEHDVEDLFVCDANFGILPRDLEIARALADARAATGAPKLIRVNFAKNSNDRVFEISKTWHDADLLMGTTLSMQSTDLDVLEAIDRKNIGLENYRKLQQRYATENIHTYTELILGLPLESPRSFRDGIGSLLEAGNHEDIRVYEFGILPNAPINTPEKIAGYGLRTVPKRLYVEEPGTPDDEAETVDMVMETNAMSRDEWVDCFGFVQAVQFLHNGCYTRYLSMYLRQRHDIGYTAFYERLQQYFGARPDTVLGSIYLRMRKLYHDYIDIPELPLANLVASQPDMAADLARYGKRRGWTIDNWGWLRIANDFERTYTELRDFVAALGVDDTSDPDLAEVFRFQQDVMLRPDYDPAAGRTTEYTADWPGYFTTGELRRRPVRMRLADQRFGANGRYTPVPGDLKAFARAAIGPSYPVSRIGHYRHRFEAAEVTSPAEPVLTEQR</sequence>
<evidence type="ECO:0000250" key="1">
    <source>
        <dbReference type="UniProtKB" id="A0A6B9HEI0"/>
    </source>
</evidence>
<evidence type="ECO:0000255" key="2">
    <source>
        <dbReference type="PROSITE-ProRule" id="PRU00666"/>
    </source>
</evidence>
<evidence type="ECO:0000255" key="3">
    <source>
        <dbReference type="PROSITE-ProRule" id="PRU01266"/>
    </source>
</evidence>
<evidence type="ECO:0000269" key="4">
    <source>
    </source>
</evidence>
<evidence type="ECO:0000269" key="5">
    <source>
    </source>
</evidence>
<evidence type="ECO:0000269" key="6">
    <source>
    </source>
</evidence>
<evidence type="ECO:0000269" key="7">
    <source>
    </source>
</evidence>
<evidence type="ECO:0000269" key="8">
    <source>
    </source>
</evidence>
<evidence type="ECO:0000303" key="9">
    <source>
    </source>
</evidence>
<evidence type="ECO:0000305" key="10"/>
<evidence type="ECO:0000305" key="11">
    <source>
    </source>
</evidence>
<evidence type="ECO:0000305" key="12">
    <source>
    </source>
</evidence>
<evidence type="ECO:0000312" key="13">
    <source>
        <dbReference type="EMBL" id="AEW99098.1"/>
    </source>
</evidence>
<evidence type="ECO:0000312" key="14">
    <source>
        <dbReference type="EMBL" id="CAD18979.1"/>
    </source>
</evidence>
<name>THNK_STREN</name>
<reference evidence="14" key="1">
    <citation type="journal article" date="2003" name="Chem. Biol.">
        <title>The biosynthetic gene cluster for the beta-lactam carbapenem thienamycin in Streptomyces cattleya.</title>
        <authorList>
            <person name="Nunez L.E."/>
            <person name="Mendez C."/>
            <person name="Brana A.F."/>
            <person name="Blanco G."/>
            <person name="Salas J.A."/>
        </authorList>
    </citation>
    <scope>NUCLEOTIDE SEQUENCE [GENOMIC DNA]</scope>
    <scope>FUNCTION</scope>
    <scope>GENE CLUSTER</scope>
    <source>
        <strain>ATCC 35852 / DSM 46488 / JCM 4925 / NBRC 14057 / NCIMB 11928 / NRRL 8057 / MA-4297</strain>
    </source>
</reference>
<reference key="2">
    <citation type="submission" date="2011-12" db="EMBL/GenBank/DDBJ databases">
        <title>Complete genome sequence of Streptomyces cattleya strain DSM 46488.</title>
        <authorList>
            <person name="Ou H.-Y."/>
            <person name="Li P."/>
            <person name="Zhao C."/>
            <person name="O'Hagan D."/>
            <person name="Deng Z."/>
        </authorList>
    </citation>
    <scope>NUCLEOTIDE SEQUENCE [LARGE SCALE GENOMIC DNA]</scope>
    <source>
        <strain>ATCC 35852 / DSM 46488 / JCM 4925 / NBRC 14057 / NCIMB 11928 / NRRL 8057 / MA-4297</strain>
        <plasmid>pSCATT</plasmid>
    </source>
</reference>
<reference key="3">
    <citation type="journal article" date="2008" name="Mol. Microbiol.">
        <title>Identification of transcriptional activators for thienamycin and cephamycin C biosynthetic genes within the thienamycin gene cluster from Streptomyces cattleya.</title>
        <authorList>
            <person name="Rodriguez M."/>
            <person name="Nunez L.E."/>
            <person name="Brana A.F."/>
            <person name="Mendez C."/>
            <person name="Salas J.A."/>
            <person name="Blanco G."/>
        </authorList>
    </citation>
    <scope>TRANSCRIPTIONAL REGULATION</scope>
    <source>
        <strain>ATCC 35852 / DSM 46488 / JCM 4925 / NBRC 14057 / NCIMB 11928 / NRRL 8057 / MA-4297</strain>
    </source>
</reference>
<reference key="4">
    <citation type="journal article" date="2015" name="Proc. Natl. Acad. Sci. U.S.A.">
        <title>Consecutive radical S-adenosylmethionine methylations form the ethyl side chain in thienamycin biosynthesis.</title>
        <authorList>
            <person name="Marous D.R."/>
            <person name="Lloyd E.P."/>
            <person name="Buller A.R."/>
            <person name="Moshos K.A."/>
            <person name="Grove T.L."/>
            <person name="Blaszczyk A.J."/>
            <person name="Booker S.J."/>
            <person name="Townsend C.A."/>
        </authorList>
    </citation>
    <scope>FUNCTION</scope>
    <scope>CATALYTIC ACTIVITY</scope>
    <scope>COFACTOR</scope>
    <scope>PATHWAY</scope>
    <source>
        <strain>ATCC 35852 / DSM 46488 / JCM 4925 / NBRC 14057 / NCIMB 11928 / NRRL 8057 / MA-4297</strain>
    </source>
</reference>
<reference key="5">
    <citation type="journal article" date="2019" name="Chem. Commun. (Camb.)">
        <title>Methylations in complex carbapenem biosynthesis are catalyzed by a single cobalamin-dependent radical S-adenosylmethionine enzyme.</title>
        <authorList>
            <person name="Sinner E.K."/>
            <person name="Lichstrahl M.S."/>
            <person name="Li R."/>
            <person name="Marous D.R."/>
            <person name="Townsend C.A."/>
        </authorList>
    </citation>
    <scope>FUNCTION</scope>
    <scope>CATALYTIC ACTIVITY</scope>
</reference>
<reference key="6">
    <citation type="journal article" date="2022" name="RSC Chem. Biol.">
        <title>Stereochemical course of cobalamin-dependent radical SAM methylation by TokK and ThnK.</title>
        <authorList>
            <person name="Lichstrahl M.S."/>
            <person name="Townsend C.A."/>
            <person name="Sinner E.K."/>
        </authorList>
    </citation>
    <scope>FUNCTION</scope>
    <scope>CATALYTIC ACTIVITY</scope>
    <scope>REACTION MECHANISM FOR THE FIRST METHYLATION</scope>
</reference>
<accession>Q83XP3</accession>
<accession>F8JND9</accession>
<accession>G8XDF2</accession>
<dbReference type="EC" id="2.1.1.394" evidence="6 7 8"/>
<dbReference type="EMBL" id="AJ421798">
    <property type="protein sequence ID" value="CAD18979.1"/>
    <property type="molecule type" value="Genomic_DNA"/>
</dbReference>
<dbReference type="EMBL" id="CP003229">
    <property type="protein sequence ID" value="AEW99098.1"/>
    <property type="molecule type" value="Genomic_DNA"/>
</dbReference>
<dbReference type="RefSeq" id="WP_014151283.1">
    <property type="nucleotide sequence ID" value="NC_016113.1"/>
</dbReference>
<dbReference type="SMR" id="Q83XP3"/>
<dbReference type="KEGG" id="sct:SCAT_p0830"/>
<dbReference type="KEGG" id="scy:SCATT_p09050"/>
<dbReference type="PATRIC" id="fig|1003195.11.peg.801"/>
<dbReference type="HOGENOM" id="CLU_025784_0_0_11"/>
<dbReference type="OMA" id="FCDWGSA"/>
<dbReference type="OrthoDB" id="5298546at2"/>
<dbReference type="Proteomes" id="UP000007842">
    <property type="component" value="Plasmid pSCATT"/>
</dbReference>
<dbReference type="GO" id="GO:0005829">
    <property type="term" value="C:cytosol"/>
    <property type="evidence" value="ECO:0007669"/>
    <property type="project" value="TreeGrafter"/>
</dbReference>
<dbReference type="GO" id="GO:0051539">
    <property type="term" value="F:4 iron, 4 sulfur cluster binding"/>
    <property type="evidence" value="ECO:0007669"/>
    <property type="project" value="UniProtKB-KW"/>
</dbReference>
<dbReference type="GO" id="GO:0031419">
    <property type="term" value="F:cobalamin binding"/>
    <property type="evidence" value="ECO:0007669"/>
    <property type="project" value="UniProtKB-KW"/>
</dbReference>
<dbReference type="GO" id="GO:0046872">
    <property type="term" value="F:metal ion binding"/>
    <property type="evidence" value="ECO:0007669"/>
    <property type="project" value="UniProtKB-KW"/>
</dbReference>
<dbReference type="GO" id="GO:0008168">
    <property type="term" value="F:methyltransferase activity"/>
    <property type="evidence" value="ECO:0007669"/>
    <property type="project" value="UniProtKB-KW"/>
</dbReference>
<dbReference type="GO" id="GO:0017000">
    <property type="term" value="P:antibiotic biosynthetic process"/>
    <property type="evidence" value="ECO:0007669"/>
    <property type="project" value="UniProtKB-KW"/>
</dbReference>
<dbReference type="GO" id="GO:0032259">
    <property type="term" value="P:methylation"/>
    <property type="evidence" value="ECO:0007669"/>
    <property type="project" value="UniProtKB-KW"/>
</dbReference>
<dbReference type="CDD" id="cd02068">
    <property type="entry name" value="radical_SAM_B12_BD"/>
    <property type="match status" value="1"/>
</dbReference>
<dbReference type="Gene3D" id="3.40.50.280">
    <property type="entry name" value="Cobalamin-binding domain"/>
    <property type="match status" value="1"/>
</dbReference>
<dbReference type="Gene3D" id="3.80.30.20">
    <property type="entry name" value="tm_1862 like domain"/>
    <property type="match status" value="1"/>
</dbReference>
<dbReference type="InterPro" id="IPR006158">
    <property type="entry name" value="Cobalamin-bd"/>
</dbReference>
<dbReference type="InterPro" id="IPR036724">
    <property type="entry name" value="Cobalamin-bd_sf"/>
</dbReference>
<dbReference type="InterPro" id="IPR006638">
    <property type="entry name" value="Elp3/MiaA/NifB-like_rSAM"/>
</dbReference>
<dbReference type="InterPro" id="IPR007197">
    <property type="entry name" value="rSAM"/>
</dbReference>
<dbReference type="InterPro" id="IPR023404">
    <property type="entry name" value="rSAM_horseshoe"/>
</dbReference>
<dbReference type="InterPro" id="IPR051198">
    <property type="entry name" value="Tetrapyrrole_Bchl_Biosynth_MTs"/>
</dbReference>
<dbReference type="InterPro" id="IPR034514">
    <property type="entry name" value="ThnK-like"/>
</dbReference>
<dbReference type="PANTHER" id="PTHR43409">
    <property type="entry name" value="ANAEROBIC MAGNESIUM-PROTOPORPHYRIN IX MONOMETHYL ESTER CYCLASE-RELATED"/>
    <property type="match status" value="1"/>
</dbReference>
<dbReference type="PANTHER" id="PTHR43409:SF16">
    <property type="entry name" value="SLR0320 PROTEIN"/>
    <property type="match status" value="1"/>
</dbReference>
<dbReference type="Pfam" id="PF02310">
    <property type="entry name" value="B12-binding"/>
    <property type="match status" value="1"/>
</dbReference>
<dbReference type="SFLD" id="SFLDF00435">
    <property type="entry name" value="carbapenem_intermediate_methyl"/>
    <property type="match status" value="1"/>
</dbReference>
<dbReference type="SFLD" id="SFLDS00029">
    <property type="entry name" value="Radical_SAM"/>
    <property type="match status" value="1"/>
</dbReference>
<dbReference type="SMART" id="SM00729">
    <property type="entry name" value="Elp3"/>
    <property type="match status" value="1"/>
</dbReference>
<dbReference type="SUPFAM" id="SSF52242">
    <property type="entry name" value="Cobalamin (vitamin B12)-binding domain"/>
    <property type="match status" value="1"/>
</dbReference>
<dbReference type="SUPFAM" id="SSF102114">
    <property type="entry name" value="Radical SAM enzymes"/>
    <property type="match status" value="1"/>
</dbReference>
<dbReference type="PROSITE" id="PS51332">
    <property type="entry name" value="B12_BINDING"/>
    <property type="match status" value="1"/>
</dbReference>
<dbReference type="PROSITE" id="PS51918">
    <property type="entry name" value="RADICAL_SAM"/>
    <property type="match status" value="1"/>
</dbReference>
<protein>
    <recommendedName>
        <fullName evidence="10">2-(S-pantetheinyl)-carbapenam-3-carboxylate methyltransferase</fullName>
        <ecNumber evidence="6 7 8">2.1.1.394</ecNumber>
    </recommendedName>
</protein>
<keyword id="KW-0004">4Fe-4S</keyword>
<keyword id="KW-0045">Antibiotic biosynthesis</keyword>
<keyword id="KW-0846">Cobalamin</keyword>
<keyword id="KW-0170">Cobalt</keyword>
<keyword id="KW-0408">Iron</keyword>
<keyword id="KW-0411">Iron-sulfur</keyword>
<keyword id="KW-0479">Metal-binding</keyword>
<keyword id="KW-0489">Methyltransferase</keyword>
<keyword id="KW-0614">Plasmid</keyword>
<keyword id="KW-1185">Reference proteome</keyword>
<keyword id="KW-0949">S-adenosyl-L-methionine</keyword>
<keyword id="KW-0808">Transferase</keyword>
<feature type="chain" id="PRO_0000461604" description="2-(S-pantetheinyl)-carbapenam-3-carboxylate methyltransferase">
    <location>
        <begin position="1"/>
        <end position="681"/>
    </location>
</feature>
<feature type="domain" description="B12-binding" evidence="2">
    <location>
        <begin position="1"/>
        <end position="144"/>
    </location>
</feature>
<feature type="domain" description="Radical SAM core" evidence="3">
    <location>
        <begin position="192"/>
        <end position="417"/>
    </location>
</feature>
<feature type="binding site" evidence="1">
    <location>
        <position position="18"/>
    </location>
    <ligand>
        <name>cob(II)alamin</name>
        <dbReference type="ChEBI" id="CHEBI:16304"/>
    </ligand>
</feature>
<feature type="binding site" evidence="1">
    <location>
        <position position="72"/>
    </location>
    <ligand>
        <name>cob(II)alamin</name>
        <dbReference type="ChEBI" id="CHEBI:16304"/>
    </ligand>
</feature>
<feature type="binding site" evidence="1">
    <location>
        <position position="74"/>
    </location>
    <ligand>
        <name>cob(II)alamin</name>
        <dbReference type="ChEBI" id="CHEBI:16304"/>
    </ligand>
</feature>
<feature type="binding site" evidence="1">
    <location>
        <position position="75"/>
    </location>
    <ligand>
        <name>cob(II)alamin</name>
        <dbReference type="ChEBI" id="CHEBI:16304"/>
    </ligand>
</feature>
<feature type="binding site" evidence="1">
    <location>
        <position position="103"/>
    </location>
    <ligand>
        <name>cob(II)alamin</name>
        <dbReference type="ChEBI" id="CHEBI:16304"/>
    </ligand>
</feature>
<feature type="binding site" evidence="1">
    <location>
        <position position="126"/>
    </location>
    <ligand>
        <name>cob(II)alamin</name>
        <dbReference type="ChEBI" id="CHEBI:16304"/>
    </ligand>
</feature>
<feature type="binding site" evidence="1">
    <location>
        <position position="127"/>
    </location>
    <ligand>
        <name>cob(II)alamin</name>
        <dbReference type="ChEBI" id="CHEBI:16304"/>
    </ligand>
</feature>
<feature type="binding site" evidence="3">
    <location>
        <position position="206"/>
    </location>
    <ligand>
        <name>[4Fe-4S] cluster</name>
        <dbReference type="ChEBI" id="CHEBI:49883"/>
        <note>4Fe-4S-S-AdoMet</note>
    </ligand>
</feature>
<feature type="binding site" evidence="3">
    <location>
        <position position="210"/>
    </location>
    <ligand>
        <name>[4Fe-4S] cluster</name>
        <dbReference type="ChEBI" id="CHEBI:49883"/>
        <note>4Fe-4S-S-AdoMet</note>
    </ligand>
</feature>
<feature type="binding site" evidence="1">
    <location>
        <position position="212"/>
    </location>
    <ligand>
        <name>5'-deoxyadenosine</name>
        <dbReference type="ChEBI" id="CHEBI:17319"/>
    </ligand>
</feature>
<feature type="binding site" evidence="3">
    <location>
        <position position="213"/>
    </location>
    <ligand>
        <name>[4Fe-4S] cluster</name>
        <dbReference type="ChEBI" id="CHEBI:49883"/>
        <note>4Fe-4S-S-AdoMet</note>
    </ligand>
</feature>
<feature type="binding site" evidence="1">
    <location>
        <position position="214"/>
    </location>
    <ligand>
        <name>cob(II)alamin</name>
        <dbReference type="ChEBI" id="CHEBI:16304"/>
    </ligand>
</feature>
<feature type="binding site" evidence="1">
    <location>
        <position position="249"/>
    </location>
    <ligand>
        <name>cob(II)alamin</name>
        <dbReference type="ChEBI" id="CHEBI:16304"/>
    </ligand>
</feature>
<feature type="binding site" evidence="1">
    <location>
        <position position="312"/>
    </location>
    <ligand>
        <name>5'-deoxyadenosine</name>
        <dbReference type="ChEBI" id="CHEBI:17319"/>
    </ligand>
</feature>
<feature type="binding site" evidence="1">
    <location>
        <position position="349"/>
    </location>
    <ligand>
        <name>5'-deoxyadenosine</name>
        <dbReference type="ChEBI" id="CHEBI:17319"/>
    </ligand>
</feature>
<feature type="binding site" evidence="1">
    <location>
        <position position="384"/>
    </location>
    <ligand>
        <name>5'-deoxyadenosine</name>
        <dbReference type="ChEBI" id="CHEBI:17319"/>
    </ligand>
</feature>
<geneLocation type="plasmid" evidence="13">
    <name>pSCATT</name>
</geneLocation>
<organism>
    <name type="scientific">Streptantibioticus cattleyicolor (strain ATCC 35852 / DSM 46488 / JCM 4925 / NBRC 14057 / NRRL 8057)</name>
    <name type="common">Streptomyces cattleya</name>
    <dbReference type="NCBI Taxonomy" id="1003195"/>
    <lineage>
        <taxon>Bacteria</taxon>
        <taxon>Bacillati</taxon>
        <taxon>Actinomycetota</taxon>
        <taxon>Actinomycetes</taxon>
        <taxon>Kitasatosporales</taxon>
        <taxon>Streptomycetaceae</taxon>
        <taxon>Streptantibioticus</taxon>
    </lineage>
</organism>
<gene>
    <name evidence="9" type="primary">thnK</name>
    <name evidence="13" type="ordered locus">SCATT_p09050</name>
</gene>
<proteinExistence type="evidence at protein level"/>
<comment type="function">
    <text evidence="4 6 7 8">Methyltransferase involved in the biosynthesis of the beta-lactam carbapenem antibiotic thienamycin (PubMed:12725858, PubMed:26240322). Catalyzes two consecutive S-adenosyl-L-methionine-dependent methylations to build out the C6-ethyl side chain in a stereocontrolled manner (PubMed:26240322, PubMed:31774078, PubMed:36042702). In vitro can use methyl viologen and NADPH as the iron-sulfur cluster reductants (PubMed:26240322).</text>
</comment>
<comment type="catalytic activity">
    <reaction evidence="6 7 8">
        <text>(2R,3R,5S)-2-(S-pantetheinyl)-carbapenam-3-carboxylate + AH2 + 2 S-adenosyl-L-methionine = (2R,3R,5S,6R)-6-(methyl)-2-(S-pantetheinyl)-carbapenam-3-carboxylate + 5'-deoxyadenosine + L-methionine + A + S-adenosyl-L-homocysteine + 2 H(+)</text>
        <dbReference type="Rhea" id="RHEA:79659"/>
        <dbReference type="ChEBI" id="CHEBI:13193"/>
        <dbReference type="ChEBI" id="CHEBI:15378"/>
        <dbReference type="ChEBI" id="CHEBI:17319"/>
        <dbReference type="ChEBI" id="CHEBI:17499"/>
        <dbReference type="ChEBI" id="CHEBI:57844"/>
        <dbReference type="ChEBI" id="CHEBI:57856"/>
        <dbReference type="ChEBI" id="CHEBI:59789"/>
        <dbReference type="ChEBI" id="CHEBI:230520"/>
        <dbReference type="ChEBI" id="CHEBI:230521"/>
        <dbReference type="EC" id="2.1.1.394"/>
    </reaction>
    <physiologicalReaction direction="left-to-right" evidence="6">
        <dbReference type="Rhea" id="RHEA:79660"/>
    </physiologicalReaction>
</comment>
<comment type="catalytic activity">
    <reaction evidence="6 7">
        <text>(2R,3R,5S,6R)-6-(methyl)-2-(S-pantetheinyl)-carbapenam-3-carboxylate + AH2 + 2 S-adenosyl-L-methionine = (2R,3R,5S,6R)-6-(ethyl)-2-(S-pantetheinyl)-carbapenam-3-carboxylate + 5'-deoxyadenosine + L-methionine + A + S-adenosyl-L-homocysteine + 2 H(+)</text>
        <dbReference type="Rhea" id="RHEA:79663"/>
        <dbReference type="ChEBI" id="CHEBI:13193"/>
        <dbReference type="ChEBI" id="CHEBI:15378"/>
        <dbReference type="ChEBI" id="CHEBI:17319"/>
        <dbReference type="ChEBI" id="CHEBI:17499"/>
        <dbReference type="ChEBI" id="CHEBI:57844"/>
        <dbReference type="ChEBI" id="CHEBI:57856"/>
        <dbReference type="ChEBI" id="CHEBI:59789"/>
        <dbReference type="ChEBI" id="CHEBI:230521"/>
        <dbReference type="ChEBI" id="CHEBI:230522"/>
        <dbReference type="EC" id="2.1.1.394"/>
    </reaction>
    <physiologicalReaction direction="left-to-right" evidence="6">
        <dbReference type="Rhea" id="RHEA:79664"/>
    </physiologicalReaction>
</comment>
<comment type="cofactor">
    <cofactor evidence="6">
        <name>[4Fe-4S] cluster</name>
        <dbReference type="ChEBI" id="CHEBI:49883"/>
    </cofactor>
    <text evidence="1">Binds 1 [4Fe-4S] cluster. The cluster is coordinated with 3 cysteines and an exchangeable S-adenosyl-L-methionine.</text>
</comment>
<comment type="cofactor">
    <cofactor evidence="12">
        <name>cob(II)alamin</name>
        <dbReference type="ChEBI" id="CHEBI:16304"/>
    </cofactor>
</comment>
<comment type="pathway">
    <text evidence="6 11">Antibiotic biosynthesis.</text>
</comment>
<comment type="induction">
    <text evidence="4 5">Part of the thienamycin (thn) gene cluster (PubMed:12725858). Expression is regulated by the ThnI transcriptional activator (PubMed:19138192).</text>
</comment>
<comment type="similarity">
    <text evidence="10">Belongs to the methyltransferase superfamily.</text>
</comment>